<gene>
    <name type="primary">arnT</name>
    <name type="synonym">pbgE</name>
    <name type="synonym">pmrK</name>
    <name type="ordered locus">plu2656</name>
</gene>
<proteinExistence type="evidence at transcript level"/>
<dbReference type="EC" id="2.4.2.43"/>
<dbReference type="EMBL" id="BX571867">
    <property type="protein sequence ID" value="CAE15030.1"/>
    <property type="molecule type" value="Genomic_DNA"/>
</dbReference>
<dbReference type="RefSeq" id="WP_011146878.1">
    <property type="nucleotide sequence ID" value="NC_005126.1"/>
</dbReference>
<dbReference type="SMR" id="Q7N3Q9"/>
<dbReference type="STRING" id="243265.plu2656"/>
<dbReference type="CAZy" id="GT83">
    <property type="family name" value="Glycosyltransferase Family 83"/>
</dbReference>
<dbReference type="GeneID" id="48848919"/>
<dbReference type="KEGG" id="plu:plu2656"/>
<dbReference type="eggNOG" id="COG1807">
    <property type="taxonomic scope" value="Bacteria"/>
</dbReference>
<dbReference type="HOGENOM" id="CLU_019200_2_1_6"/>
<dbReference type="OrthoDB" id="9775035at2"/>
<dbReference type="UniPathway" id="UPA00037"/>
<dbReference type="Proteomes" id="UP000002514">
    <property type="component" value="Chromosome"/>
</dbReference>
<dbReference type="GO" id="GO:0005886">
    <property type="term" value="C:plasma membrane"/>
    <property type="evidence" value="ECO:0007669"/>
    <property type="project" value="UniProtKB-SubCell"/>
</dbReference>
<dbReference type="GO" id="GO:0103015">
    <property type="term" value="F:4-amino-4-deoxy-L-arabinose transferase activity"/>
    <property type="evidence" value="ECO:0007669"/>
    <property type="project" value="UniProtKB-EC"/>
</dbReference>
<dbReference type="GO" id="GO:0000030">
    <property type="term" value="F:mannosyltransferase activity"/>
    <property type="evidence" value="ECO:0007669"/>
    <property type="project" value="InterPro"/>
</dbReference>
<dbReference type="GO" id="GO:0009245">
    <property type="term" value="P:lipid A biosynthetic process"/>
    <property type="evidence" value="ECO:0007669"/>
    <property type="project" value="UniProtKB-UniRule"/>
</dbReference>
<dbReference type="GO" id="GO:0009103">
    <property type="term" value="P:lipopolysaccharide biosynthetic process"/>
    <property type="evidence" value="ECO:0007669"/>
    <property type="project" value="UniProtKB-KW"/>
</dbReference>
<dbReference type="GO" id="GO:0006493">
    <property type="term" value="P:protein O-linked glycosylation"/>
    <property type="evidence" value="ECO:0007669"/>
    <property type="project" value="InterPro"/>
</dbReference>
<dbReference type="GO" id="GO:0010041">
    <property type="term" value="P:response to iron(III) ion"/>
    <property type="evidence" value="ECO:0007669"/>
    <property type="project" value="TreeGrafter"/>
</dbReference>
<dbReference type="HAMAP" id="MF_01165">
    <property type="entry name" value="ArnT_transfer"/>
    <property type="match status" value="1"/>
</dbReference>
<dbReference type="InterPro" id="IPR022839">
    <property type="entry name" value="ArnT_tfrase"/>
</dbReference>
<dbReference type="InterPro" id="IPR003342">
    <property type="entry name" value="Glyco_trans_39/83"/>
</dbReference>
<dbReference type="InterPro" id="IPR050297">
    <property type="entry name" value="LipidA_mod_glycosyltrf_83"/>
</dbReference>
<dbReference type="NCBIfam" id="NF009784">
    <property type="entry name" value="PRK13279.1"/>
    <property type="match status" value="1"/>
</dbReference>
<dbReference type="PANTHER" id="PTHR33908">
    <property type="entry name" value="MANNOSYLTRANSFERASE YKCB-RELATED"/>
    <property type="match status" value="1"/>
</dbReference>
<dbReference type="PANTHER" id="PTHR33908:SF3">
    <property type="entry name" value="UNDECAPRENYL PHOSPHATE-ALPHA-4-AMINO-4-DEOXY-L-ARABINOSE ARABINOSYL TRANSFERASE"/>
    <property type="match status" value="1"/>
</dbReference>
<dbReference type="Pfam" id="PF02366">
    <property type="entry name" value="PMT"/>
    <property type="match status" value="1"/>
</dbReference>
<accession>Q7N3Q9</accession>
<comment type="function">
    <text evidence="1">Catalyzes the transfer of the L-Ara4N moiety of the glycolipid undecaprenyl phosphate-alpha-L-Ara4N to lipid A. The modified arabinose is attached to lipid A and is required for resistance to polymyxin and cationic antimicrobial peptides (By similarity).</text>
</comment>
<comment type="catalytic activity">
    <reaction>
        <text>4-amino-4-deoxy-alpha-L-arabinopyranosyl di-trans,octa-cis-undecaprenyl phosphate + lipid IVA = lipid IIA + di-trans,octa-cis-undecaprenyl phosphate.</text>
        <dbReference type="EC" id="2.4.2.43"/>
    </reaction>
</comment>
<comment type="pathway">
    <text>Lipopolysaccharide metabolism; 4-amino-4-deoxy-beta-L-arabinose-lipid A biosynthesis.</text>
</comment>
<comment type="subcellular location">
    <subcellularLocation>
        <location evidence="1">Cell inner membrane</location>
        <topology evidence="1">Multi-pass membrane protein</topology>
    </subcellularLocation>
</comment>
<comment type="induction">
    <text>Activated by low magnesium concentrations, via the two-component regulatory system PhoP/PhoQ.</text>
</comment>
<comment type="similarity">
    <text evidence="3">Belongs to the glycosyltransferase 83 family.</text>
</comment>
<feature type="chain" id="PRO_0000121508" description="Undecaprenyl phosphate-alpha-4-amino-4-deoxy-L-arabinose arabinosyl transferase">
    <location>
        <begin position="1"/>
        <end position="553"/>
    </location>
</feature>
<feature type="transmembrane region" description="Helical" evidence="2">
    <location>
        <begin position="6"/>
        <end position="26"/>
    </location>
</feature>
<feature type="transmembrane region" description="Helical" evidence="2">
    <location>
        <begin position="89"/>
        <end position="109"/>
    </location>
</feature>
<feature type="transmembrane region" description="Helical" evidence="2">
    <location>
        <begin position="115"/>
        <end position="135"/>
    </location>
</feature>
<feature type="transmembrane region" description="Helical" evidence="2">
    <location>
        <begin position="180"/>
        <end position="200"/>
    </location>
</feature>
<feature type="transmembrane region" description="Helical" evidence="2">
    <location>
        <begin position="208"/>
        <end position="228"/>
    </location>
</feature>
<feature type="transmembrane region" description="Helical" evidence="2">
    <location>
        <begin position="258"/>
        <end position="278"/>
    </location>
</feature>
<feature type="transmembrane region" description="Helical" evidence="2">
    <location>
        <begin position="293"/>
        <end position="313"/>
    </location>
</feature>
<feature type="transmembrane region" description="Helical" evidence="2">
    <location>
        <begin position="317"/>
        <end position="337"/>
    </location>
</feature>
<feature type="transmembrane region" description="Helical" evidence="2">
    <location>
        <begin position="352"/>
        <end position="372"/>
    </location>
</feature>
<feature type="transmembrane region" description="Helical" evidence="2">
    <location>
        <begin position="386"/>
        <end position="406"/>
    </location>
</feature>
<feature type="transmembrane region" description="Helical" evidence="2">
    <location>
        <begin position="410"/>
        <end position="430"/>
    </location>
</feature>
<keyword id="KW-0997">Cell inner membrane</keyword>
<keyword id="KW-1003">Cell membrane</keyword>
<keyword id="KW-0328">Glycosyltransferase</keyword>
<keyword id="KW-0441">Lipid A biosynthesis</keyword>
<keyword id="KW-0444">Lipid biosynthesis</keyword>
<keyword id="KW-0443">Lipid metabolism</keyword>
<keyword id="KW-0448">Lipopolysaccharide biosynthesis</keyword>
<keyword id="KW-0472">Membrane</keyword>
<keyword id="KW-1185">Reference proteome</keyword>
<keyword id="KW-0808">Transferase</keyword>
<keyword id="KW-0812">Transmembrane</keyword>
<keyword id="KW-1133">Transmembrane helix</keyword>
<reference key="1">
    <citation type="journal article" date="2003" name="Nat. Biotechnol.">
        <title>The genome sequence of the entomopathogenic bacterium Photorhabdus luminescens.</title>
        <authorList>
            <person name="Duchaud E."/>
            <person name="Rusniok C."/>
            <person name="Frangeul L."/>
            <person name="Buchrieser C."/>
            <person name="Givaudan A."/>
            <person name="Taourit S."/>
            <person name="Bocs S."/>
            <person name="Boursaux-Eude C."/>
            <person name="Chandler M."/>
            <person name="Charles J.-F."/>
            <person name="Dassa E."/>
            <person name="Derose R."/>
            <person name="Derzelle S."/>
            <person name="Freyssinet G."/>
            <person name="Gaudriault S."/>
            <person name="Medigue C."/>
            <person name="Lanois A."/>
            <person name="Powell K."/>
            <person name="Siguier P."/>
            <person name="Vincent R."/>
            <person name="Wingate V."/>
            <person name="Zouine M."/>
            <person name="Glaser P."/>
            <person name="Boemare N."/>
            <person name="Danchin A."/>
            <person name="Kunst F."/>
        </authorList>
    </citation>
    <scope>NUCLEOTIDE SEQUENCE [LARGE SCALE GENOMIC DNA]</scope>
    <source>
        <strain>DSM 15139 / CIP 105565 / TT01</strain>
    </source>
</reference>
<reference key="2">
    <citation type="journal article" date="2004" name="J. Bacteriol.">
        <title>The PhoP-PhoQ two-component regulatory system of Photorhabdus luminescens is essential for virulence in insects.</title>
        <authorList>
            <person name="Derzelle S."/>
            <person name="Turlin E."/>
            <person name="Duchaud E."/>
            <person name="Pages S."/>
            <person name="Kunst F."/>
            <person name="Givaudan A."/>
            <person name="Danchin A."/>
        </authorList>
    </citation>
    <scope>REGULATION BY PHOP AND PHOQ</scope>
</reference>
<name>ARNT_PHOLL</name>
<protein>
    <recommendedName>
        <fullName>Undecaprenyl phosphate-alpha-4-amino-4-deoxy-L-arabinose arabinosyl transferase</fullName>
        <ecNumber>2.4.2.43</ecNumber>
    </recommendedName>
    <alternativeName>
        <fullName>4-amino-4-deoxy-L-arabinose lipid A transferase</fullName>
    </alternativeName>
    <alternativeName>
        <fullName>Lipid IV(A) 4-amino-4-deoxy-L-arabinosyltransferase</fullName>
    </alternativeName>
    <alternativeName>
        <fullName>Polymyxin resistance protein PmrK</fullName>
    </alternativeName>
    <alternativeName>
        <fullName>Undecaprenyl phosphate-alpha-L-Ara4N transferase</fullName>
    </alternativeName>
</protein>
<organism>
    <name type="scientific">Photorhabdus laumondii subsp. laumondii (strain DSM 15139 / CIP 105565 / TT01)</name>
    <name type="common">Photorhabdus luminescens subsp. laumondii</name>
    <dbReference type="NCBI Taxonomy" id="243265"/>
    <lineage>
        <taxon>Bacteria</taxon>
        <taxon>Pseudomonadati</taxon>
        <taxon>Pseudomonadota</taxon>
        <taxon>Gammaproteobacteria</taxon>
        <taxon>Enterobacterales</taxon>
        <taxon>Morganellaceae</taxon>
        <taxon>Photorhabdus</taxon>
    </lineage>
</organism>
<sequence length="553" mass="63917">MLNNRACKVGAFLMALFFVITYLLPLNGRLLWQPDETRYAEISREMLQRGDWIVPYLLDIRYFEKPVAGYWINNISQWIFGDNNFAVRFGSVFCIFISAILLYRLAMMMWHNRHIAFATSLIYISMFLVFAIGTYSVLDPMFSLWVTAAMMCSFWGLKTDCTRRRIMAYLVLGLCCGMGFMTKGFLALAVPVIVMLPIVIYQKRVLQIVCFGPLAIISAIAISLPWVIAIALREPDYWHYFFWVEHIKRFSSDDAQHIAPFWYYIPILILGVIPWLGLLPGAVMKSWKERKSNPEMFFLLCWFVVPLLFFSIAKGKLPTYILPCMAPLAMMMAKFGVDCVKNGKMELLKINGMVNVFLGLLAVIVLFAMEVVTKHALYQPSEWLKWVLAIVAFGIWGIIGYLCFALNGKYWLLAAFCSIVVSLVIGHALPENTVNSKLPQNFIKLHHQELAGSRYILSESVGLATSVAWEMKRSDIYMFERWGELEYGLNYPDSRYRYISYKDFPQWLAKARKEGRVSVLFHLYKDEKLPDLPKADQISRNYRFAILVYEKQP</sequence>
<evidence type="ECO:0000250" key="1"/>
<evidence type="ECO:0000255" key="2"/>
<evidence type="ECO:0000305" key="3"/>